<protein>
    <recommendedName>
        <fullName evidence="1">Acyl carrier protein</fullName>
        <shortName evidence="1">ACP</shortName>
    </recommendedName>
</protein>
<reference key="1">
    <citation type="journal article" date="2006" name="PLoS Genet.">
        <title>Who ate whom? Adaptive Helicobacter genomic changes that accompanied a host jump from early humans to large felines.</title>
        <authorList>
            <person name="Eppinger M."/>
            <person name="Baar C."/>
            <person name="Linz B."/>
            <person name="Raddatz G."/>
            <person name="Lanz C."/>
            <person name="Keller H."/>
            <person name="Morelli G."/>
            <person name="Gressmann H."/>
            <person name="Achtman M."/>
            <person name="Schuster S.C."/>
        </authorList>
    </citation>
    <scope>NUCLEOTIDE SEQUENCE [LARGE SCALE GENOMIC DNA]</scope>
    <source>
        <strain>Sheeba</strain>
    </source>
</reference>
<gene>
    <name evidence="1" type="primary">acpP</name>
    <name type="ordered locus">Hac_0780</name>
</gene>
<organism>
    <name type="scientific">Helicobacter acinonychis (strain Sheeba)</name>
    <dbReference type="NCBI Taxonomy" id="382638"/>
    <lineage>
        <taxon>Bacteria</taxon>
        <taxon>Pseudomonadati</taxon>
        <taxon>Campylobacterota</taxon>
        <taxon>Epsilonproteobacteria</taxon>
        <taxon>Campylobacterales</taxon>
        <taxon>Helicobacteraceae</taxon>
        <taxon>Helicobacter</taxon>
    </lineage>
</organism>
<sequence>MALFEDIQAVITEQLNVDAAQVTLEAEFVKDLGADSLDVVELIMALEEKFGIEIPDEQAEKIVNVGDVVKYIEDNKLA</sequence>
<accession>Q17XQ6</accession>
<evidence type="ECO:0000255" key="1">
    <source>
        <dbReference type="HAMAP-Rule" id="MF_01217"/>
    </source>
</evidence>
<evidence type="ECO:0000255" key="2">
    <source>
        <dbReference type="PROSITE-ProRule" id="PRU00258"/>
    </source>
</evidence>
<comment type="function">
    <text evidence="1">Carrier of the growing fatty acid chain in fatty acid biosynthesis.</text>
</comment>
<comment type="pathway">
    <text evidence="1">Lipid metabolism; fatty acid biosynthesis.</text>
</comment>
<comment type="subcellular location">
    <subcellularLocation>
        <location evidence="1">Cytoplasm</location>
    </subcellularLocation>
</comment>
<comment type="PTM">
    <text evidence="1">4'-phosphopantetheine is transferred from CoA to a specific serine of apo-ACP by AcpS. This modification is essential for activity because fatty acids are bound in thioester linkage to the sulfhydryl of the prosthetic group.</text>
</comment>
<comment type="similarity">
    <text evidence="1">Belongs to the acyl carrier protein (ACP) family.</text>
</comment>
<dbReference type="EMBL" id="AM260522">
    <property type="protein sequence ID" value="CAJ99570.1"/>
    <property type="molecule type" value="Genomic_DNA"/>
</dbReference>
<dbReference type="RefSeq" id="WP_011577683.1">
    <property type="nucleotide sequence ID" value="NC_008229.1"/>
</dbReference>
<dbReference type="SMR" id="Q17XQ6"/>
<dbReference type="STRING" id="382638.Hac_0780"/>
<dbReference type="GeneID" id="31758206"/>
<dbReference type="KEGG" id="hac:Hac_0780"/>
<dbReference type="eggNOG" id="COG0236">
    <property type="taxonomic scope" value="Bacteria"/>
</dbReference>
<dbReference type="HOGENOM" id="CLU_108696_5_1_7"/>
<dbReference type="OrthoDB" id="9804551at2"/>
<dbReference type="BioCyc" id="HACI382638:HAC_RS03370-MONOMER"/>
<dbReference type="UniPathway" id="UPA00094"/>
<dbReference type="Proteomes" id="UP000000775">
    <property type="component" value="Chromosome"/>
</dbReference>
<dbReference type="GO" id="GO:0005829">
    <property type="term" value="C:cytosol"/>
    <property type="evidence" value="ECO:0007669"/>
    <property type="project" value="TreeGrafter"/>
</dbReference>
<dbReference type="GO" id="GO:0016020">
    <property type="term" value="C:membrane"/>
    <property type="evidence" value="ECO:0007669"/>
    <property type="project" value="GOC"/>
</dbReference>
<dbReference type="GO" id="GO:0000035">
    <property type="term" value="F:acyl binding"/>
    <property type="evidence" value="ECO:0007669"/>
    <property type="project" value="TreeGrafter"/>
</dbReference>
<dbReference type="GO" id="GO:0000036">
    <property type="term" value="F:acyl carrier activity"/>
    <property type="evidence" value="ECO:0007669"/>
    <property type="project" value="UniProtKB-UniRule"/>
</dbReference>
<dbReference type="GO" id="GO:0009245">
    <property type="term" value="P:lipid A biosynthetic process"/>
    <property type="evidence" value="ECO:0007669"/>
    <property type="project" value="TreeGrafter"/>
</dbReference>
<dbReference type="FunFam" id="1.10.1200.10:FF:000006">
    <property type="entry name" value="Acyl carrier protein"/>
    <property type="match status" value="1"/>
</dbReference>
<dbReference type="Gene3D" id="1.10.1200.10">
    <property type="entry name" value="ACP-like"/>
    <property type="match status" value="1"/>
</dbReference>
<dbReference type="HAMAP" id="MF_01217">
    <property type="entry name" value="Acyl_carrier"/>
    <property type="match status" value="1"/>
</dbReference>
<dbReference type="InterPro" id="IPR003231">
    <property type="entry name" value="ACP"/>
</dbReference>
<dbReference type="InterPro" id="IPR036736">
    <property type="entry name" value="ACP-like_sf"/>
</dbReference>
<dbReference type="InterPro" id="IPR009081">
    <property type="entry name" value="PP-bd_ACP"/>
</dbReference>
<dbReference type="InterPro" id="IPR006162">
    <property type="entry name" value="Ppantetheine_attach_site"/>
</dbReference>
<dbReference type="NCBIfam" id="TIGR00517">
    <property type="entry name" value="acyl_carrier"/>
    <property type="match status" value="1"/>
</dbReference>
<dbReference type="NCBIfam" id="NF002148">
    <property type="entry name" value="PRK00982.1-2"/>
    <property type="match status" value="1"/>
</dbReference>
<dbReference type="NCBIfam" id="NF002150">
    <property type="entry name" value="PRK00982.1-4"/>
    <property type="match status" value="1"/>
</dbReference>
<dbReference type="NCBIfam" id="NF002151">
    <property type="entry name" value="PRK00982.1-5"/>
    <property type="match status" value="1"/>
</dbReference>
<dbReference type="PANTHER" id="PTHR20863">
    <property type="entry name" value="ACYL CARRIER PROTEIN"/>
    <property type="match status" value="1"/>
</dbReference>
<dbReference type="PANTHER" id="PTHR20863:SF76">
    <property type="entry name" value="CARRIER DOMAIN-CONTAINING PROTEIN"/>
    <property type="match status" value="1"/>
</dbReference>
<dbReference type="Pfam" id="PF00550">
    <property type="entry name" value="PP-binding"/>
    <property type="match status" value="1"/>
</dbReference>
<dbReference type="SUPFAM" id="SSF47336">
    <property type="entry name" value="ACP-like"/>
    <property type="match status" value="1"/>
</dbReference>
<dbReference type="PROSITE" id="PS50075">
    <property type="entry name" value="CARRIER"/>
    <property type="match status" value="1"/>
</dbReference>
<dbReference type="PROSITE" id="PS00012">
    <property type="entry name" value="PHOSPHOPANTETHEINE"/>
    <property type="match status" value="1"/>
</dbReference>
<proteinExistence type="inferred from homology"/>
<keyword id="KW-0963">Cytoplasm</keyword>
<keyword id="KW-0275">Fatty acid biosynthesis</keyword>
<keyword id="KW-0276">Fatty acid metabolism</keyword>
<keyword id="KW-0444">Lipid biosynthesis</keyword>
<keyword id="KW-0443">Lipid metabolism</keyword>
<keyword id="KW-0596">Phosphopantetheine</keyword>
<keyword id="KW-0597">Phosphoprotein</keyword>
<name>ACP_HELAH</name>
<feature type="chain" id="PRO_1000066622" description="Acyl carrier protein">
    <location>
        <begin position="1"/>
        <end position="78"/>
    </location>
</feature>
<feature type="domain" description="Carrier" evidence="2">
    <location>
        <begin position="1"/>
        <end position="76"/>
    </location>
</feature>
<feature type="modified residue" description="O-(pantetheine 4'-phosphoryl)serine" evidence="2">
    <location>
        <position position="36"/>
    </location>
</feature>